<evidence type="ECO:0000255" key="1">
    <source>
        <dbReference type="HAMAP-Rule" id="MF_01062"/>
    </source>
</evidence>
<feature type="chain" id="PRO_1000136449" description="Putative phosphoenolpyruvate synthase regulatory protein">
    <location>
        <begin position="1"/>
        <end position="278"/>
    </location>
</feature>
<feature type="binding site" evidence="1">
    <location>
        <begin position="158"/>
        <end position="165"/>
    </location>
    <ligand>
        <name>ADP</name>
        <dbReference type="ChEBI" id="CHEBI:456216"/>
    </ligand>
</feature>
<gene>
    <name type="ordered locus">ABAYE1392</name>
</gene>
<name>PSRP_ACIBY</name>
<dbReference type="EC" id="2.7.11.33" evidence="1"/>
<dbReference type="EC" id="2.7.4.28" evidence="1"/>
<dbReference type="EMBL" id="CU459141">
    <property type="protein sequence ID" value="CAM86305.1"/>
    <property type="molecule type" value="Genomic_DNA"/>
</dbReference>
<dbReference type="RefSeq" id="WP_000004354.1">
    <property type="nucleotide sequence ID" value="NZ_JBDGFB010000016.1"/>
</dbReference>
<dbReference type="SMR" id="B0V7F2"/>
<dbReference type="EnsemblBacteria" id="CAM86305">
    <property type="protein sequence ID" value="CAM86305"/>
    <property type="gene ID" value="ABAYE1392"/>
</dbReference>
<dbReference type="KEGG" id="aby:ABAYE1392"/>
<dbReference type="HOGENOM" id="CLU_046206_1_0_6"/>
<dbReference type="GO" id="GO:0043531">
    <property type="term" value="F:ADP binding"/>
    <property type="evidence" value="ECO:0007669"/>
    <property type="project" value="UniProtKB-UniRule"/>
</dbReference>
<dbReference type="GO" id="GO:0005524">
    <property type="term" value="F:ATP binding"/>
    <property type="evidence" value="ECO:0007669"/>
    <property type="project" value="InterPro"/>
</dbReference>
<dbReference type="GO" id="GO:0016776">
    <property type="term" value="F:phosphotransferase activity, phosphate group as acceptor"/>
    <property type="evidence" value="ECO:0007669"/>
    <property type="project" value="UniProtKB-UniRule"/>
</dbReference>
<dbReference type="GO" id="GO:0004674">
    <property type="term" value="F:protein serine/threonine kinase activity"/>
    <property type="evidence" value="ECO:0007669"/>
    <property type="project" value="UniProtKB-UniRule"/>
</dbReference>
<dbReference type="HAMAP" id="MF_01062">
    <property type="entry name" value="PSRP"/>
    <property type="match status" value="1"/>
</dbReference>
<dbReference type="InterPro" id="IPR005177">
    <property type="entry name" value="Kinase-pyrophosphorylase"/>
</dbReference>
<dbReference type="InterPro" id="IPR026530">
    <property type="entry name" value="PSRP"/>
</dbReference>
<dbReference type="NCBIfam" id="NF003742">
    <property type="entry name" value="PRK05339.1"/>
    <property type="match status" value="1"/>
</dbReference>
<dbReference type="PANTHER" id="PTHR31756">
    <property type="entry name" value="PYRUVATE, PHOSPHATE DIKINASE REGULATORY PROTEIN 1, CHLOROPLASTIC"/>
    <property type="match status" value="1"/>
</dbReference>
<dbReference type="PANTHER" id="PTHR31756:SF3">
    <property type="entry name" value="PYRUVATE, PHOSPHATE DIKINASE REGULATORY PROTEIN 1, CHLOROPLASTIC"/>
    <property type="match status" value="1"/>
</dbReference>
<dbReference type="Pfam" id="PF03618">
    <property type="entry name" value="Kinase-PPPase"/>
    <property type="match status" value="1"/>
</dbReference>
<accession>B0V7F2</accession>
<sequence length="278" mass="31217">MSESKQFKRSVFFISDGTAITAETLGHSLLAQFPNVDFDIHIMPYITTEEAAMAVVVEINKCQTRDGCLPLVFDTLVDPHVREIINTAKAVNLDVFEGLISKLEQELGTPPTTLVGQTHAVTDSEYYKARIDAVHFALDNDDGARTRHYDKADLILIGVSRSGKTPTSIYLSLQFGIRVANYPLTEEDLDDNRLPAVLREHRSKLFGLMIDAERLVAIRSERKANSRYASFSQCQMELRAIEGIYISEGIKYLNVTEMSIEEISTRILQMTGLKRRIG</sequence>
<comment type="function">
    <text evidence="1">Bifunctional serine/threonine kinase and phosphorylase involved in the regulation of the phosphoenolpyruvate synthase (PEPS) by catalyzing its phosphorylation/dephosphorylation.</text>
</comment>
<comment type="catalytic activity">
    <reaction evidence="1">
        <text>[pyruvate, water dikinase] + ADP = [pyruvate, water dikinase]-phosphate + AMP + H(+)</text>
        <dbReference type="Rhea" id="RHEA:46020"/>
        <dbReference type="Rhea" id="RHEA-COMP:11425"/>
        <dbReference type="Rhea" id="RHEA-COMP:11426"/>
        <dbReference type="ChEBI" id="CHEBI:15378"/>
        <dbReference type="ChEBI" id="CHEBI:43176"/>
        <dbReference type="ChEBI" id="CHEBI:68546"/>
        <dbReference type="ChEBI" id="CHEBI:456215"/>
        <dbReference type="ChEBI" id="CHEBI:456216"/>
        <dbReference type="EC" id="2.7.11.33"/>
    </reaction>
</comment>
<comment type="catalytic activity">
    <reaction evidence="1">
        <text>[pyruvate, water dikinase]-phosphate + phosphate + H(+) = [pyruvate, water dikinase] + diphosphate</text>
        <dbReference type="Rhea" id="RHEA:48580"/>
        <dbReference type="Rhea" id="RHEA-COMP:11425"/>
        <dbReference type="Rhea" id="RHEA-COMP:11426"/>
        <dbReference type="ChEBI" id="CHEBI:15378"/>
        <dbReference type="ChEBI" id="CHEBI:33019"/>
        <dbReference type="ChEBI" id="CHEBI:43176"/>
        <dbReference type="ChEBI" id="CHEBI:43474"/>
        <dbReference type="ChEBI" id="CHEBI:68546"/>
        <dbReference type="EC" id="2.7.4.28"/>
    </reaction>
</comment>
<comment type="similarity">
    <text evidence="1">Belongs to the pyruvate, phosphate/water dikinase regulatory protein family. PSRP subfamily.</text>
</comment>
<keyword id="KW-0418">Kinase</keyword>
<keyword id="KW-0547">Nucleotide-binding</keyword>
<keyword id="KW-0723">Serine/threonine-protein kinase</keyword>
<keyword id="KW-0808">Transferase</keyword>
<organism>
    <name type="scientific">Acinetobacter baumannii (strain AYE)</name>
    <dbReference type="NCBI Taxonomy" id="509173"/>
    <lineage>
        <taxon>Bacteria</taxon>
        <taxon>Pseudomonadati</taxon>
        <taxon>Pseudomonadota</taxon>
        <taxon>Gammaproteobacteria</taxon>
        <taxon>Moraxellales</taxon>
        <taxon>Moraxellaceae</taxon>
        <taxon>Acinetobacter</taxon>
        <taxon>Acinetobacter calcoaceticus/baumannii complex</taxon>
    </lineage>
</organism>
<reference key="1">
    <citation type="journal article" date="2008" name="PLoS ONE">
        <title>Comparative analysis of Acinetobacters: three genomes for three lifestyles.</title>
        <authorList>
            <person name="Vallenet D."/>
            <person name="Nordmann P."/>
            <person name="Barbe V."/>
            <person name="Poirel L."/>
            <person name="Mangenot S."/>
            <person name="Bataille E."/>
            <person name="Dossat C."/>
            <person name="Gas S."/>
            <person name="Kreimeyer A."/>
            <person name="Lenoble P."/>
            <person name="Oztas S."/>
            <person name="Poulain J."/>
            <person name="Segurens B."/>
            <person name="Robert C."/>
            <person name="Abergel C."/>
            <person name="Claverie J.-M."/>
            <person name="Raoult D."/>
            <person name="Medigue C."/>
            <person name="Weissenbach J."/>
            <person name="Cruveiller S."/>
        </authorList>
    </citation>
    <scope>NUCLEOTIDE SEQUENCE [LARGE SCALE GENOMIC DNA]</scope>
    <source>
        <strain>AYE</strain>
    </source>
</reference>
<protein>
    <recommendedName>
        <fullName evidence="1">Putative phosphoenolpyruvate synthase regulatory protein</fullName>
        <shortName evidence="1">PEP synthase regulatory protein</shortName>
        <shortName evidence="1">PSRP</shortName>
        <ecNumber evidence="1">2.7.11.33</ecNumber>
        <ecNumber evidence="1">2.7.4.28</ecNumber>
    </recommendedName>
    <alternativeName>
        <fullName evidence="1">Pyruvate, water dikinase regulatory protein</fullName>
    </alternativeName>
</protein>
<proteinExistence type="inferred from homology"/>